<reference key="1">
    <citation type="journal article" date="1993" name="J. Biochem.">
        <title>Molecular cloning, nucleotide sequencing, and affinity labeling of bovine liver UDP-glucose pyrophosphorylase.</title>
        <authorList>
            <person name="Konishi Y."/>
            <person name="Tanizawa K."/>
            <person name="Muroya S."/>
            <person name="Fukui T."/>
        </authorList>
    </citation>
    <scope>NUCLEOTIDE SEQUENCE [MRNA]</scope>
    <scope>PARTIAL PROTEIN SEQUENCE</scope>
    <source>
        <strain>Danshaku-Imo</strain>
        <tissue>Liver</tissue>
    </source>
</reference>
<reference key="2">
    <citation type="submission" date="2006-06" db="EMBL/GenBank/DDBJ databases">
        <authorList>
            <consortium name="NIH - Mammalian Gene Collection (MGC) project"/>
        </authorList>
    </citation>
    <scope>NUCLEOTIDE SEQUENCE [LARGE SCALE MRNA]</scope>
    <source>
        <strain>Hereford</strain>
        <tissue>Thalamus</tissue>
    </source>
</reference>
<evidence type="ECO:0000250" key="1"/>
<evidence type="ECO:0000250" key="2">
    <source>
        <dbReference type="UniProtKB" id="Q16851"/>
    </source>
</evidence>
<evidence type="ECO:0000250" key="3">
    <source>
        <dbReference type="UniProtKB" id="Q9M9P3"/>
    </source>
</evidence>
<evidence type="ECO:0000305" key="4"/>
<keyword id="KW-0007">Acetylation</keyword>
<keyword id="KW-0963">Cytoplasm</keyword>
<keyword id="KW-0903">Direct protein sequencing</keyword>
<keyword id="KW-0460">Magnesium</keyword>
<keyword id="KW-0479">Metal-binding</keyword>
<keyword id="KW-0548">Nucleotidyltransferase</keyword>
<keyword id="KW-0597">Phosphoprotein</keyword>
<keyword id="KW-1185">Reference proteome</keyword>
<keyword id="KW-0808">Transferase</keyword>
<feature type="chain" id="PRO_0000185751" description="UTP--glucose-1-phosphate uridylyltransferase">
    <location>
        <begin position="1"/>
        <end position="508"/>
    </location>
</feature>
<feature type="region of interest" description="Oligomerization" evidence="1">
    <location>
        <begin position="457"/>
        <end position="508"/>
    </location>
</feature>
<feature type="region of interest" description="Critical for end-to-end subunit interaction" evidence="1">
    <location>
        <begin position="502"/>
        <end position="503"/>
    </location>
</feature>
<feature type="active site" evidence="1">
    <location>
        <position position="396"/>
    </location>
</feature>
<feature type="binding site" evidence="3">
    <location>
        <begin position="113"/>
        <end position="116"/>
    </location>
    <ligand>
        <name>UTP</name>
        <dbReference type="ChEBI" id="CHEBI:46398"/>
    </ligand>
</feature>
<feature type="binding site" evidence="2">
    <location>
        <begin position="115"/>
        <end position="116"/>
    </location>
    <ligand>
        <name>substrate</name>
    </ligand>
</feature>
<feature type="binding site" evidence="1">
    <location>
        <position position="127"/>
    </location>
    <ligand>
        <name>Mg(2+)</name>
        <dbReference type="ChEBI" id="CHEBI:18420"/>
    </ligand>
</feature>
<feature type="binding site" evidence="3">
    <location>
        <position position="127"/>
    </location>
    <ligand>
        <name>UTP</name>
        <dbReference type="ChEBI" id="CHEBI:46398"/>
    </ligand>
</feature>
<feature type="binding site" evidence="3">
    <location>
        <position position="190"/>
    </location>
    <ligand>
        <name>UTP</name>
        <dbReference type="ChEBI" id="CHEBI:46398"/>
    </ligand>
</feature>
<feature type="binding site" evidence="3">
    <location>
        <position position="222"/>
    </location>
    <ligand>
        <name>UTP</name>
        <dbReference type="ChEBI" id="CHEBI:46398"/>
    </ligand>
</feature>
<feature type="binding site" evidence="2">
    <location>
        <position position="223"/>
    </location>
    <ligand>
        <name>substrate</name>
    </ligand>
</feature>
<feature type="binding site" evidence="2">
    <location>
        <begin position="251"/>
        <end position="253"/>
    </location>
    <ligand>
        <name>substrate</name>
    </ligand>
</feature>
<feature type="binding site" evidence="1">
    <location>
        <position position="253"/>
    </location>
    <ligand>
        <name>Mg(2+)</name>
        <dbReference type="ChEBI" id="CHEBI:18420"/>
    </ligand>
</feature>
<feature type="binding site" evidence="3">
    <location>
        <position position="253"/>
    </location>
    <ligand>
        <name>UTP</name>
        <dbReference type="ChEBI" id="CHEBI:46398"/>
    </ligand>
</feature>
<feature type="binding site" evidence="3">
    <location>
        <position position="396"/>
    </location>
    <ligand>
        <name>UTP</name>
        <dbReference type="ChEBI" id="CHEBI:46398"/>
    </ligand>
</feature>
<feature type="modified residue" description="Blocked amino end (Ser)">
    <location>
        <position position="2"/>
    </location>
</feature>
<feature type="modified residue" description="Phosphoserine" evidence="2">
    <location>
        <position position="13"/>
    </location>
</feature>
<feature type="modified residue" description="Phosphothreonine" evidence="2">
    <location>
        <position position="426"/>
    </location>
</feature>
<feature type="modified residue" description="Phosphoserine" evidence="2">
    <location>
        <position position="434"/>
    </location>
</feature>
<feature type="modified residue" description="N6-acetyllysine" evidence="2">
    <location>
        <position position="438"/>
    </location>
</feature>
<feature type="modified residue" description="Phosphoserine" evidence="2">
    <location>
        <position position="448"/>
    </location>
</feature>
<feature type="modified residue" description="Phosphoserine" evidence="2">
    <location>
        <position position="461"/>
    </location>
</feature>
<accession>Q07130</accession>
<accession>Q17QU0</accession>
<proteinExistence type="evidence at protein level"/>
<organism>
    <name type="scientific">Bos taurus</name>
    <name type="common">Bovine</name>
    <dbReference type="NCBI Taxonomy" id="9913"/>
    <lineage>
        <taxon>Eukaryota</taxon>
        <taxon>Metazoa</taxon>
        <taxon>Chordata</taxon>
        <taxon>Craniata</taxon>
        <taxon>Vertebrata</taxon>
        <taxon>Euteleostomi</taxon>
        <taxon>Mammalia</taxon>
        <taxon>Eutheria</taxon>
        <taxon>Laurasiatheria</taxon>
        <taxon>Artiodactyla</taxon>
        <taxon>Ruminantia</taxon>
        <taxon>Pecora</taxon>
        <taxon>Bovidae</taxon>
        <taxon>Bovinae</taxon>
        <taxon>Bos</taxon>
    </lineage>
</organism>
<gene>
    <name type="primary">UGP2</name>
</gene>
<sequence>MSRFVQDLSKAMSQDGASQFQEVIRQELELSVKKELEKILTTAPSHEFEHTKKDLDGFRKLFHRFLQEKGPSVDWGKIQRPPEDSIQPYEKIKARGLPDNVSSVLNKLVVVKLNGGLGTSMGCKGPKSLIGVRNENTFLDLTVQQIEHLNKTYDTDVPLVLMNSFNTDEDTKKILQKYNHCRVKIYTFNQSRYPRINKESLLPVAKNVSYSGENTEAWYPPGHGDIYASFYNSGLLDTFIGEGKEYIFVSNIDNLGATVDLYILNHLMNPPNGKPCEFVMEVTNKTRADVKGGTLTQYEGKLRLVEIAQVPKAHVDEFKSVSKFKIFNTNNLWISLAAVKRLQEQNAIDMEIIVNPKTLDGGLNVIQLETAVGAAIKSFENSLGINVPRSRFLPVKTTSDLLLVMSNLYSLNAGSLTMSEKREFPTVPLVKLGSSFTKVQDYLRRFESIPDMLELDHLTVSGDVTFGKNVSLKGTVIIIANHGDRIDIPPGAVLENKIVSGNLRILDH</sequence>
<comment type="function">
    <text evidence="2">UTP--glucose-1-phosphate uridylyltransferase catalyzing the conversion of glucose-1-phosphate into UDP-glucose, a crucial precursor for the production of glycogen.</text>
</comment>
<comment type="catalytic activity">
    <reaction evidence="2">
        <text>alpha-D-glucose 1-phosphate + UTP + H(+) = UDP-alpha-D-glucose + diphosphate</text>
        <dbReference type="Rhea" id="RHEA:19889"/>
        <dbReference type="ChEBI" id="CHEBI:15378"/>
        <dbReference type="ChEBI" id="CHEBI:33019"/>
        <dbReference type="ChEBI" id="CHEBI:46398"/>
        <dbReference type="ChEBI" id="CHEBI:58601"/>
        <dbReference type="ChEBI" id="CHEBI:58885"/>
        <dbReference type="EC" id="2.7.7.9"/>
    </reaction>
    <physiologicalReaction direction="left-to-right" evidence="2">
        <dbReference type="Rhea" id="RHEA:19890"/>
    </physiologicalReaction>
</comment>
<comment type="pathway">
    <text evidence="2">Glycan biosynthesis; glycogen biosynthesis.</text>
</comment>
<comment type="subunit">
    <text evidence="2">Homooctamer.</text>
</comment>
<comment type="subcellular location">
    <subcellularLocation>
        <location evidence="2">Cytoplasm</location>
    </subcellularLocation>
</comment>
<comment type="similarity">
    <text evidence="4">Belongs to the UDPGP type 1 family.</text>
</comment>
<protein>
    <recommendedName>
        <fullName>UTP--glucose-1-phosphate uridylyltransferase</fullName>
        <ecNumber evidence="2">2.7.7.9</ecNumber>
    </recommendedName>
    <alternativeName>
        <fullName>UDP-glucose pyrophosphorylase</fullName>
        <shortName>UDPGP</shortName>
        <shortName>UGPase</shortName>
    </alternativeName>
</protein>
<name>UGPA_BOVIN</name>
<dbReference type="EC" id="2.7.7.9" evidence="2"/>
<dbReference type="EMBL" id="L14019">
    <property type="protein sequence ID" value="AAA30801.1"/>
    <property type="molecule type" value="mRNA"/>
</dbReference>
<dbReference type="EMBL" id="BC118181">
    <property type="protein sequence ID" value="AAI18182.1"/>
    <property type="molecule type" value="mRNA"/>
</dbReference>
<dbReference type="PIR" id="JX0277">
    <property type="entry name" value="JX0277"/>
</dbReference>
<dbReference type="RefSeq" id="NP_776637.1">
    <property type="nucleotide sequence ID" value="NM_174212.2"/>
</dbReference>
<dbReference type="SMR" id="Q07130"/>
<dbReference type="FunCoup" id="Q07130">
    <property type="interactions" value="2569"/>
</dbReference>
<dbReference type="STRING" id="9913.ENSBTAP00000073301"/>
<dbReference type="iPTMnet" id="Q07130"/>
<dbReference type="PaxDb" id="9913-ENSBTAP00000042228"/>
<dbReference type="PeptideAtlas" id="Q07130"/>
<dbReference type="Ensembl" id="ENSBTAT00000044762.4">
    <property type="protein sequence ID" value="ENSBTAP00000042228.3"/>
    <property type="gene ID" value="ENSBTAG00000000111.7"/>
</dbReference>
<dbReference type="GeneID" id="281565"/>
<dbReference type="KEGG" id="bta:281565"/>
<dbReference type="CTD" id="7360"/>
<dbReference type="VEuPathDB" id="HostDB:ENSBTAG00000000111"/>
<dbReference type="VGNC" id="VGNC:36651">
    <property type="gene designation" value="UGP2"/>
</dbReference>
<dbReference type="eggNOG" id="KOG2638">
    <property type="taxonomic scope" value="Eukaryota"/>
</dbReference>
<dbReference type="GeneTree" id="ENSGT00940000153464"/>
<dbReference type="HOGENOM" id="CLU_023632_3_0_1"/>
<dbReference type="InParanoid" id="Q07130"/>
<dbReference type="OMA" id="KEYCFLS"/>
<dbReference type="OrthoDB" id="932129at2759"/>
<dbReference type="TreeFam" id="TF300567"/>
<dbReference type="Reactome" id="R-BTA-173599">
    <property type="pathway name" value="Formation of the active cofactor, UDP-glucuronate"/>
</dbReference>
<dbReference type="Reactome" id="R-BTA-3322077">
    <property type="pathway name" value="Glycogen synthesis"/>
</dbReference>
<dbReference type="SABIO-RK" id="Q07130"/>
<dbReference type="UniPathway" id="UPA00164"/>
<dbReference type="Proteomes" id="UP000009136">
    <property type="component" value="Chromosome 11"/>
</dbReference>
<dbReference type="Bgee" id="ENSBTAG00000000111">
    <property type="expression patterns" value="Expressed in tongue muscle and 106 other cell types or tissues"/>
</dbReference>
<dbReference type="GO" id="GO:0005737">
    <property type="term" value="C:cytoplasm"/>
    <property type="evidence" value="ECO:0000318"/>
    <property type="project" value="GO_Central"/>
</dbReference>
<dbReference type="GO" id="GO:0046872">
    <property type="term" value="F:metal ion binding"/>
    <property type="evidence" value="ECO:0007669"/>
    <property type="project" value="UniProtKB-KW"/>
</dbReference>
<dbReference type="GO" id="GO:0003983">
    <property type="term" value="F:UTP:glucose-1-phosphate uridylyltransferase activity"/>
    <property type="evidence" value="ECO:0000318"/>
    <property type="project" value="GO_Central"/>
</dbReference>
<dbReference type="GO" id="GO:0005978">
    <property type="term" value="P:glycogen biosynthetic process"/>
    <property type="evidence" value="ECO:0007669"/>
    <property type="project" value="UniProtKB-UniPathway"/>
</dbReference>
<dbReference type="GO" id="GO:0005977">
    <property type="term" value="P:glycogen metabolic process"/>
    <property type="evidence" value="ECO:0000318"/>
    <property type="project" value="GO_Central"/>
</dbReference>
<dbReference type="GO" id="GO:0006011">
    <property type="term" value="P:UDP-alpha-D-glucose metabolic process"/>
    <property type="evidence" value="ECO:0000318"/>
    <property type="project" value="GO_Central"/>
</dbReference>
<dbReference type="CDD" id="cd00897">
    <property type="entry name" value="UGPase_euk"/>
    <property type="match status" value="1"/>
</dbReference>
<dbReference type="FunFam" id="2.160.10.10:FF:000001">
    <property type="entry name" value="UTP--glucose-1-phosphate uridylyltransferase"/>
    <property type="match status" value="1"/>
</dbReference>
<dbReference type="FunFam" id="3.90.550.10:FF:000002">
    <property type="entry name" value="UTP--glucose-1-phosphate uridylyltransferase"/>
    <property type="match status" value="1"/>
</dbReference>
<dbReference type="Gene3D" id="2.160.10.10">
    <property type="entry name" value="Hexapeptide repeat proteins"/>
    <property type="match status" value="1"/>
</dbReference>
<dbReference type="Gene3D" id="3.90.550.10">
    <property type="entry name" value="Spore Coat Polysaccharide Biosynthesis Protein SpsA, Chain A"/>
    <property type="match status" value="1"/>
</dbReference>
<dbReference type="InterPro" id="IPR029044">
    <property type="entry name" value="Nucleotide-diphossugar_trans"/>
</dbReference>
<dbReference type="InterPro" id="IPR002618">
    <property type="entry name" value="UDPGP_fam"/>
</dbReference>
<dbReference type="InterPro" id="IPR016267">
    <property type="entry name" value="UDPGP_trans"/>
</dbReference>
<dbReference type="PANTHER" id="PTHR43511">
    <property type="match status" value="1"/>
</dbReference>
<dbReference type="Pfam" id="PF01704">
    <property type="entry name" value="UDPGP"/>
    <property type="match status" value="1"/>
</dbReference>
<dbReference type="PIRSF" id="PIRSF000806">
    <property type="entry name" value="UDPGP"/>
    <property type="match status" value="1"/>
</dbReference>
<dbReference type="SUPFAM" id="SSF53448">
    <property type="entry name" value="Nucleotide-diphospho-sugar transferases"/>
    <property type="match status" value="1"/>
</dbReference>